<proteinExistence type="inferred from homology"/>
<organism>
    <name type="scientific">African swine fever virus (isolate Warthog/Namibia/Wart80/1980)</name>
    <name type="common">ASFV</name>
    <dbReference type="NCBI Taxonomy" id="561444"/>
    <lineage>
        <taxon>Viruses</taxon>
        <taxon>Varidnaviria</taxon>
        <taxon>Bamfordvirae</taxon>
        <taxon>Nucleocytoviricota</taxon>
        <taxon>Pokkesviricetes</taxon>
        <taxon>Asfuvirales</taxon>
        <taxon>Asfarviridae</taxon>
        <taxon>Asfivirus</taxon>
        <taxon>African swine fever virus</taxon>
    </lineage>
</organism>
<comment type="function">
    <text evidence="1">Plays a role in virus cell tropism, and may be required for efficient virus replication in macrophages.</text>
</comment>
<comment type="induction">
    <text evidence="3">Expressed in the early phase of the viral replicative cycle.</text>
</comment>
<comment type="similarity">
    <text evidence="4">Belongs to the asfivirus MGF 110 family.</text>
</comment>
<gene>
    <name type="ordered locus">War-007</name>
</gene>
<accession>P0C9G5</accession>
<protein>
    <recommendedName>
        <fullName>Protein MGF 110-2L</fullName>
    </recommendedName>
</protein>
<name>1102L_ASFWA</name>
<reference key="1">
    <citation type="submission" date="2003-03" db="EMBL/GenBank/DDBJ databases">
        <title>African swine fever virus genomes.</title>
        <authorList>
            <person name="Kutish G.F."/>
            <person name="Rock D.L."/>
        </authorList>
    </citation>
    <scope>NUCLEOTIDE SEQUENCE [LARGE SCALE GENOMIC DNA]</scope>
</reference>
<dbReference type="EMBL" id="AY261366">
    <property type="status" value="NOT_ANNOTATED_CDS"/>
    <property type="molecule type" value="Genomic_DNA"/>
</dbReference>
<dbReference type="IntAct" id="P0C9G5">
    <property type="interactions" value="1"/>
</dbReference>
<dbReference type="MINT" id="P0C9G5"/>
<dbReference type="Proteomes" id="UP000000858">
    <property type="component" value="Segment"/>
</dbReference>
<dbReference type="InterPro" id="IPR004848">
    <property type="entry name" value="ASFV_fam_110"/>
</dbReference>
<dbReference type="Pfam" id="PF01639">
    <property type="entry name" value="v110"/>
    <property type="match status" value="1"/>
</dbReference>
<evidence type="ECO:0000250" key="1"/>
<evidence type="ECO:0000250" key="2">
    <source>
        <dbReference type="UniProtKB" id="A9JLI3"/>
    </source>
</evidence>
<evidence type="ECO:0000250" key="3">
    <source>
        <dbReference type="UniProtKB" id="P18559"/>
    </source>
</evidence>
<evidence type="ECO:0000305" key="4"/>
<organismHost>
    <name type="scientific">Ornithodoros</name>
    <name type="common">relapsing fever ticks</name>
    <dbReference type="NCBI Taxonomy" id="6937"/>
</organismHost>
<organismHost>
    <name type="scientific">Phacochoerus aethiopicus</name>
    <name type="common">Warthog</name>
    <dbReference type="NCBI Taxonomy" id="85517"/>
</organismHost>
<organismHost>
    <name type="scientific">Phacochoerus africanus</name>
    <name type="common">Warthog</name>
    <dbReference type="NCBI Taxonomy" id="41426"/>
</organismHost>
<organismHost>
    <name type="scientific">Potamochoerus larvatus</name>
    <name type="common">Bushpig</name>
    <dbReference type="NCBI Taxonomy" id="273792"/>
</organismHost>
<organismHost>
    <name type="scientific">Sus scrofa</name>
    <name type="common">Pig</name>
    <dbReference type="NCBI Taxonomy" id="9823"/>
</organismHost>
<keyword id="KW-0244">Early protein</keyword>
<keyword id="KW-0732">Signal</keyword>
<feature type="signal peptide" evidence="2">
    <location>
        <begin position="1"/>
        <end position="31"/>
    </location>
</feature>
<feature type="chain" id="PRO_0000373187" description="Protein MGF 110-2L">
    <location>
        <begin position="32"/>
        <end position="104"/>
    </location>
</feature>
<sequence length="104" mass="12163">MRFFSYLGLLLAGLVSLQGFSTDNPLEEELRYWCQYVKNCRFCWACQDGLCKNKVLKDMPSVQEHSYPMEHCMIHRQCKYIRDGPIFQAECTMQTCDATHLINA</sequence>